<accession>A8AL48</accession>
<sequence length="309" mass="34919">MSIRIIPQDELEKSEKRTADMIPPLLFPRLKNLYNRRAERLRELAENNPLGDYLRFAALIAHAQEVVLYDHPLEMDLTARIKEANAQGKPPLDIHVLPRDKHWQKLLHSLIAELKPEMSGPALAVIENLEKASEQELEQMASALFESNFASVSSDKAPFIWAALSLYWAQMASLIPGKARAEYGEQRQYCPVCGSMPVSSMVQIGTTQGLRYLHCNLCETEWHVVRVKCSNCEQSRDLHYWSLDNEQASIKAESCGDCGTYLKILYQEKDPKVEAVADDLASLVLDARMEQEGFARSSINPFLFPGEGE</sequence>
<protein>
    <recommendedName>
        <fullName evidence="1">Protein FdhE homolog</fullName>
    </recommendedName>
</protein>
<organism>
    <name type="scientific">Citrobacter koseri (strain ATCC BAA-895 / CDC 4225-83 / SGSC4696)</name>
    <dbReference type="NCBI Taxonomy" id="290338"/>
    <lineage>
        <taxon>Bacteria</taxon>
        <taxon>Pseudomonadati</taxon>
        <taxon>Pseudomonadota</taxon>
        <taxon>Gammaproteobacteria</taxon>
        <taxon>Enterobacterales</taxon>
        <taxon>Enterobacteriaceae</taxon>
        <taxon>Citrobacter</taxon>
    </lineage>
</organism>
<feature type="chain" id="PRO_1000056698" description="Protein FdhE homolog">
    <location>
        <begin position="1"/>
        <end position="309"/>
    </location>
</feature>
<gene>
    <name evidence="1" type="primary">fdhE</name>
    <name type="ordered locus">CKO_03120</name>
</gene>
<proteinExistence type="inferred from homology"/>
<name>FDHE_CITK8</name>
<dbReference type="EMBL" id="CP000822">
    <property type="protein sequence ID" value="ABV14211.1"/>
    <property type="molecule type" value="Genomic_DNA"/>
</dbReference>
<dbReference type="RefSeq" id="WP_012133918.1">
    <property type="nucleotide sequence ID" value="NC_009792.1"/>
</dbReference>
<dbReference type="SMR" id="A8AL48"/>
<dbReference type="STRING" id="290338.CKO_03120"/>
<dbReference type="GeneID" id="45136914"/>
<dbReference type="KEGG" id="cko:CKO_03120"/>
<dbReference type="HOGENOM" id="CLU_055275_0_0_6"/>
<dbReference type="OrthoDB" id="9794151at2"/>
<dbReference type="Proteomes" id="UP000008148">
    <property type="component" value="Chromosome"/>
</dbReference>
<dbReference type="GO" id="GO:0005829">
    <property type="term" value="C:cytosol"/>
    <property type="evidence" value="ECO:0007669"/>
    <property type="project" value="TreeGrafter"/>
</dbReference>
<dbReference type="GO" id="GO:0008199">
    <property type="term" value="F:ferric iron binding"/>
    <property type="evidence" value="ECO:0007669"/>
    <property type="project" value="TreeGrafter"/>
</dbReference>
<dbReference type="GO" id="GO:0051604">
    <property type="term" value="P:protein maturation"/>
    <property type="evidence" value="ECO:0007669"/>
    <property type="project" value="TreeGrafter"/>
</dbReference>
<dbReference type="CDD" id="cd16341">
    <property type="entry name" value="FdhE"/>
    <property type="match status" value="1"/>
</dbReference>
<dbReference type="FunFam" id="3.90.1670.10:FF:000001">
    <property type="entry name" value="Protein FdhE"/>
    <property type="match status" value="1"/>
</dbReference>
<dbReference type="Gene3D" id="3.90.1670.10">
    <property type="entry name" value="FdhE-like domain"/>
    <property type="match status" value="1"/>
</dbReference>
<dbReference type="HAMAP" id="MF_00611">
    <property type="entry name" value="FdeH"/>
    <property type="match status" value="1"/>
</dbReference>
<dbReference type="InterPro" id="IPR024064">
    <property type="entry name" value="FdhE-like_sf"/>
</dbReference>
<dbReference type="InterPro" id="IPR056796">
    <property type="entry name" value="FdhE_C"/>
</dbReference>
<dbReference type="InterPro" id="IPR056797">
    <property type="entry name" value="FdhE_central"/>
</dbReference>
<dbReference type="InterPro" id="IPR056774">
    <property type="entry name" value="FdhE_N"/>
</dbReference>
<dbReference type="InterPro" id="IPR006452">
    <property type="entry name" value="Formate_DH_accessory"/>
</dbReference>
<dbReference type="NCBIfam" id="TIGR01562">
    <property type="entry name" value="FdhE"/>
    <property type="match status" value="1"/>
</dbReference>
<dbReference type="NCBIfam" id="NF002925">
    <property type="entry name" value="PRK03564.1"/>
    <property type="match status" value="1"/>
</dbReference>
<dbReference type="PANTHER" id="PTHR37689">
    <property type="entry name" value="PROTEIN FDHE"/>
    <property type="match status" value="1"/>
</dbReference>
<dbReference type="PANTHER" id="PTHR37689:SF1">
    <property type="entry name" value="PROTEIN FDHE"/>
    <property type="match status" value="1"/>
</dbReference>
<dbReference type="Pfam" id="PF24860">
    <property type="entry name" value="FdhE_C"/>
    <property type="match status" value="1"/>
</dbReference>
<dbReference type="Pfam" id="PF24859">
    <property type="entry name" value="FdhE_central"/>
    <property type="match status" value="1"/>
</dbReference>
<dbReference type="Pfam" id="PF04216">
    <property type="entry name" value="FdhE_N"/>
    <property type="match status" value="1"/>
</dbReference>
<dbReference type="PIRSF" id="PIRSF018296">
    <property type="entry name" value="Format_dh_formtn"/>
    <property type="match status" value="1"/>
</dbReference>
<dbReference type="SUPFAM" id="SSF144020">
    <property type="entry name" value="FdhE-like"/>
    <property type="match status" value="1"/>
</dbReference>
<comment type="function">
    <text evidence="1">Necessary for formate dehydrogenase activity.</text>
</comment>
<comment type="subcellular location">
    <subcellularLocation>
        <location evidence="1">Cytoplasm</location>
    </subcellularLocation>
</comment>
<comment type="similarity">
    <text evidence="1">Belongs to the FdhE family.</text>
</comment>
<evidence type="ECO:0000255" key="1">
    <source>
        <dbReference type="HAMAP-Rule" id="MF_00611"/>
    </source>
</evidence>
<keyword id="KW-0963">Cytoplasm</keyword>
<keyword id="KW-1185">Reference proteome</keyword>
<reference key="1">
    <citation type="submission" date="2007-08" db="EMBL/GenBank/DDBJ databases">
        <authorList>
            <consortium name="The Citrobacter koseri Genome Sequencing Project"/>
            <person name="McClelland M."/>
            <person name="Sanderson E.K."/>
            <person name="Porwollik S."/>
            <person name="Spieth J."/>
            <person name="Clifton W.S."/>
            <person name="Latreille P."/>
            <person name="Courtney L."/>
            <person name="Wang C."/>
            <person name="Pepin K."/>
            <person name="Bhonagiri V."/>
            <person name="Nash W."/>
            <person name="Johnson M."/>
            <person name="Thiruvilangam P."/>
            <person name="Wilson R."/>
        </authorList>
    </citation>
    <scope>NUCLEOTIDE SEQUENCE [LARGE SCALE GENOMIC DNA]</scope>
    <source>
        <strain>ATCC BAA-895 / CDC 4225-83 / SGSC4696</strain>
    </source>
</reference>